<dbReference type="EC" id="1.2.1.41" evidence="1"/>
<dbReference type="EMBL" id="CP001182">
    <property type="protein sequence ID" value="ACJ40013.1"/>
    <property type="molecule type" value="Genomic_DNA"/>
</dbReference>
<dbReference type="RefSeq" id="WP_001154158.1">
    <property type="nucleotide sequence ID" value="NC_011586.2"/>
</dbReference>
<dbReference type="SMR" id="B7I5F5"/>
<dbReference type="KEGG" id="abn:AB57_0592"/>
<dbReference type="HOGENOM" id="CLU_030231_0_0_6"/>
<dbReference type="UniPathway" id="UPA00098">
    <property type="reaction ID" value="UER00360"/>
</dbReference>
<dbReference type="Proteomes" id="UP000007094">
    <property type="component" value="Chromosome"/>
</dbReference>
<dbReference type="GO" id="GO:0005737">
    <property type="term" value="C:cytoplasm"/>
    <property type="evidence" value="ECO:0007669"/>
    <property type="project" value="UniProtKB-SubCell"/>
</dbReference>
<dbReference type="GO" id="GO:0004350">
    <property type="term" value="F:glutamate-5-semialdehyde dehydrogenase activity"/>
    <property type="evidence" value="ECO:0007669"/>
    <property type="project" value="UniProtKB-UniRule"/>
</dbReference>
<dbReference type="GO" id="GO:0050661">
    <property type="term" value="F:NADP binding"/>
    <property type="evidence" value="ECO:0007669"/>
    <property type="project" value="InterPro"/>
</dbReference>
<dbReference type="GO" id="GO:0055129">
    <property type="term" value="P:L-proline biosynthetic process"/>
    <property type="evidence" value="ECO:0007669"/>
    <property type="project" value="UniProtKB-UniRule"/>
</dbReference>
<dbReference type="CDD" id="cd07079">
    <property type="entry name" value="ALDH_F18-19_ProA-GPR"/>
    <property type="match status" value="1"/>
</dbReference>
<dbReference type="FunFam" id="3.40.309.10:FF:000006">
    <property type="entry name" value="Gamma-glutamyl phosphate reductase"/>
    <property type="match status" value="1"/>
</dbReference>
<dbReference type="Gene3D" id="3.40.605.10">
    <property type="entry name" value="Aldehyde Dehydrogenase, Chain A, domain 1"/>
    <property type="match status" value="1"/>
</dbReference>
<dbReference type="Gene3D" id="3.40.309.10">
    <property type="entry name" value="Aldehyde Dehydrogenase, Chain A, domain 2"/>
    <property type="match status" value="1"/>
</dbReference>
<dbReference type="HAMAP" id="MF_00412">
    <property type="entry name" value="ProA"/>
    <property type="match status" value="1"/>
</dbReference>
<dbReference type="InterPro" id="IPR016161">
    <property type="entry name" value="Ald_DH/histidinol_DH"/>
</dbReference>
<dbReference type="InterPro" id="IPR016163">
    <property type="entry name" value="Ald_DH_C"/>
</dbReference>
<dbReference type="InterPro" id="IPR016162">
    <property type="entry name" value="Ald_DH_N"/>
</dbReference>
<dbReference type="InterPro" id="IPR015590">
    <property type="entry name" value="Aldehyde_DH_dom"/>
</dbReference>
<dbReference type="InterPro" id="IPR020593">
    <property type="entry name" value="G-glutamylP_reductase_CS"/>
</dbReference>
<dbReference type="InterPro" id="IPR012134">
    <property type="entry name" value="Glu-5-SA_DH"/>
</dbReference>
<dbReference type="InterPro" id="IPR000965">
    <property type="entry name" value="GPR_dom"/>
</dbReference>
<dbReference type="NCBIfam" id="NF001221">
    <property type="entry name" value="PRK00197.1"/>
    <property type="match status" value="1"/>
</dbReference>
<dbReference type="NCBIfam" id="TIGR00407">
    <property type="entry name" value="proA"/>
    <property type="match status" value="1"/>
</dbReference>
<dbReference type="PANTHER" id="PTHR11063:SF8">
    <property type="entry name" value="DELTA-1-PYRROLINE-5-CARBOXYLATE SYNTHASE"/>
    <property type="match status" value="1"/>
</dbReference>
<dbReference type="PANTHER" id="PTHR11063">
    <property type="entry name" value="GLUTAMATE SEMIALDEHYDE DEHYDROGENASE"/>
    <property type="match status" value="1"/>
</dbReference>
<dbReference type="Pfam" id="PF00171">
    <property type="entry name" value="Aldedh"/>
    <property type="match status" value="2"/>
</dbReference>
<dbReference type="PIRSF" id="PIRSF000151">
    <property type="entry name" value="GPR"/>
    <property type="match status" value="1"/>
</dbReference>
<dbReference type="SUPFAM" id="SSF53720">
    <property type="entry name" value="ALDH-like"/>
    <property type="match status" value="1"/>
</dbReference>
<dbReference type="PROSITE" id="PS01223">
    <property type="entry name" value="PROA"/>
    <property type="match status" value="1"/>
</dbReference>
<keyword id="KW-0028">Amino-acid biosynthesis</keyword>
<keyword id="KW-0963">Cytoplasm</keyword>
<keyword id="KW-0521">NADP</keyword>
<keyword id="KW-0560">Oxidoreductase</keyword>
<keyword id="KW-0641">Proline biosynthesis</keyword>
<feature type="chain" id="PRO_1000123766" description="Gamma-glutamyl phosphate reductase">
    <location>
        <begin position="1"/>
        <end position="421"/>
    </location>
</feature>
<comment type="function">
    <text evidence="1">Catalyzes the NADPH-dependent reduction of L-glutamate 5-phosphate into L-glutamate 5-semialdehyde and phosphate. The product spontaneously undergoes cyclization to form 1-pyrroline-5-carboxylate.</text>
</comment>
<comment type="catalytic activity">
    <reaction evidence="1">
        <text>L-glutamate 5-semialdehyde + phosphate + NADP(+) = L-glutamyl 5-phosphate + NADPH + H(+)</text>
        <dbReference type="Rhea" id="RHEA:19541"/>
        <dbReference type="ChEBI" id="CHEBI:15378"/>
        <dbReference type="ChEBI" id="CHEBI:43474"/>
        <dbReference type="ChEBI" id="CHEBI:57783"/>
        <dbReference type="ChEBI" id="CHEBI:58066"/>
        <dbReference type="ChEBI" id="CHEBI:58274"/>
        <dbReference type="ChEBI" id="CHEBI:58349"/>
        <dbReference type="EC" id="1.2.1.41"/>
    </reaction>
</comment>
<comment type="pathway">
    <text evidence="1">Amino-acid biosynthesis; L-proline biosynthesis; L-glutamate 5-semialdehyde from L-glutamate: step 2/2.</text>
</comment>
<comment type="subcellular location">
    <subcellularLocation>
        <location evidence="1">Cytoplasm</location>
    </subcellularLocation>
</comment>
<comment type="similarity">
    <text evidence="1">Belongs to the gamma-glutamyl phosphate reductase family.</text>
</comment>
<accession>B7I5F5</accession>
<protein>
    <recommendedName>
        <fullName evidence="1">Gamma-glutamyl phosphate reductase</fullName>
        <shortName evidence="1">GPR</shortName>
        <ecNumber evidence="1">1.2.1.41</ecNumber>
    </recommendedName>
    <alternativeName>
        <fullName evidence="1">Glutamate-5-semialdehyde dehydrogenase</fullName>
    </alternativeName>
    <alternativeName>
        <fullName evidence="1">Glutamyl-gamma-semialdehyde dehydrogenase</fullName>
        <shortName evidence="1">GSA dehydrogenase</shortName>
    </alternativeName>
</protein>
<gene>
    <name evidence="1" type="primary">proA</name>
    <name type="ordered locus">AB57_0592</name>
</gene>
<evidence type="ECO:0000255" key="1">
    <source>
        <dbReference type="HAMAP-Rule" id="MF_00412"/>
    </source>
</evidence>
<sequence>MQDSIEQYMQKVGQQARDASRVLTSASTSLKNHALSAIYTALENNQAAILAANQIDMEKGRSNQLDSALLDRLELTPARFKGMLQGLKDVIALVDPIGEITDLAYRPTGIQIGKMRVPLGVVGMIYESRPNVTLEAASLAIKSGNAIILRGGSEALESNKAIAEAVKHGLKVAGLPEHSVQVIETSDRAAVGHLITMAEYVDVIVPRGGKSLIERVTNEARIPVIKHLDGNCHVFVEAQADLQKALPITLNAKTHRYGVCNAMETLLVDEKIAEVFLPHIAELYAEKQVELRGCPETRRILGSSVKPATEEDWYTEYLGPILAVKVVSGIDEAIDHINKYGSHHTDAIVTENYTLARQFLARVDSSSVVVNASTRFADGFEYGLGAEIGISTDKIHARGPVGLEGLTSQKWIVLGDGQIRQ</sequence>
<name>PROA_ACIB5</name>
<proteinExistence type="inferred from homology"/>
<organism>
    <name type="scientific">Acinetobacter baumannii (strain AB0057)</name>
    <dbReference type="NCBI Taxonomy" id="480119"/>
    <lineage>
        <taxon>Bacteria</taxon>
        <taxon>Pseudomonadati</taxon>
        <taxon>Pseudomonadota</taxon>
        <taxon>Gammaproteobacteria</taxon>
        <taxon>Moraxellales</taxon>
        <taxon>Moraxellaceae</taxon>
        <taxon>Acinetobacter</taxon>
        <taxon>Acinetobacter calcoaceticus/baumannii complex</taxon>
    </lineage>
</organism>
<reference key="1">
    <citation type="journal article" date="2008" name="J. Bacteriol.">
        <title>Comparative genome sequence analysis of multidrug-resistant Acinetobacter baumannii.</title>
        <authorList>
            <person name="Adams M.D."/>
            <person name="Goglin K."/>
            <person name="Molyneaux N."/>
            <person name="Hujer K.M."/>
            <person name="Lavender H."/>
            <person name="Jamison J.J."/>
            <person name="MacDonald I.J."/>
            <person name="Martin K.M."/>
            <person name="Russo T."/>
            <person name="Campagnari A.A."/>
            <person name="Hujer A.M."/>
            <person name="Bonomo R.A."/>
            <person name="Gill S.R."/>
        </authorList>
    </citation>
    <scope>NUCLEOTIDE SEQUENCE [LARGE SCALE GENOMIC DNA]</scope>
    <source>
        <strain>AB0057</strain>
    </source>
</reference>